<proteinExistence type="inferred from homology"/>
<dbReference type="EC" id="5.1.3.1" evidence="1"/>
<dbReference type="EMBL" id="AE005674">
    <property type="protein sequence ID" value="AAN44866.1"/>
    <property type="molecule type" value="Genomic_DNA"/>
</dbReference>
<dbReference type="EMBL" id="AE014073">
    <property type="protein sequence ID" value="AAP19312.1"/>
    <property type="molecule type" value="Genomic_DNA"/>
</dbReference>
<dbReference type="RefSeq" id="NP_709159.1">
    <property type="nucleotide sequence ID" value="NC_004337.2"/>
</dbReference>
<dbReference type="RefSeq" id="WP_000816280.1">
    <property type="nucleotide sequence ID" value="NZ_WPGW01000003.1"/>
</dbReference>
<dbReference type="SMR" id="P0AG10"/>
<dbReference type="STRING" id="198214.SF3404"/>
<dbReference type="PaxDb" id="198214-SF3404"/>
<dbReference type="GeneID" id="1026889"/>
<dbReference type="GeneID" id="93778612"/>
<dbReference type="KEGG" id="sfl:SF3404"/>
<dbReference type="KEGG" id="sfx:S4358"/>
<dbReference type="PATRIC" id="fig|198214.7.peg.4018"/>
<dbReference type="HOGENOM" id="CLU_054856_2_1_6"/>
<dbReference type="Proteomes" id="UP000001006">
    <property type="component" value="Chromosome"/>
</dbReference>
<dbReference type="Proteomes" id="UP000002673">
    <property type="component" value="Chromosome"/>
</dbReference>
<dbReference type="GO" id="GO:0004750">
    <property type="term" value="F:D-ribulose-phosphate 3-epimerase activity"/>
    <property type="evidence" value="ECO:0007669"/>
    <property type="project" value="UniProtKB-UniRule"/>
</dbReference>
<dbReference type="GO" id="GO:0046872">
    <property type="term" value="F:metal ion binding"/>
    <property type="evidence" value="ECO:0007669"/>
    <property type="project" value="UniProtKB-UniRule"/>
</dbReference>
<dbReference type="GO" id="GO:0019323">
    <property type="term" value="P:pentose catabolic process"/>
    <property type="evidence" value="ECO:0007669"/>
    <property type="project" value="UniProtKB-UniRule"/>
</dbReference>
<dbReference type="GO" id="GO:0006098">
    <property type="term" value="P:pentose-phosphate shunt"/>
    <property type="evidence" value="ECO:0007669"/>
    <property type="project" value="InterPro"/>
</dbReference>
<dbReference type="CDD" id="cd00429">
    <property type="entry name" value="RPE"/>
    <property type="match status" value="1"/>
</dbReference>
<dbReference type="FunFam" id="3.20.20.70:FF:000004">
    <property type="entry name" value="Ribulose-phosphate 3-epimerase"/>
    <property type="match status" value="1"/>
</dbReference>
<dbReference type="Gene3D" id="3.20.20.70">
    <property type="entry name" value="Aldolase class I"/>
    <property type="match status" value="1"/>
</dbReference>
<dbReference type="HAMAP" id="MF_02227">
    <property type="entry name" value="RPE"/>
    <property type="match status" value="1"/>
</dbReference>
<dbReference type="InterPro" id="IPR013785">
    <property type="entry name" value="Aldolase_TIM"/>
</dbReference>
<dbReference type="InterPro" id="IPR026019">
    <property type="entry name" value="Ribul_P_3_epim"/>
</dbReference>
<dbReference type="InterPro" id="IPR000056">
    <property type="entry name" value="Ribul_P_3_epim-like"/>
</dbReference>
<dbReference type="InterPro" id="IPR011060">
    <property type="entry name" value="RibuloseP-bd_barrel"/>
</dbReference>
<dbReference type="NCBIfam" id="NF004076">
    <property type="entry name" value="PRK05581.1-4"/>
    <property type="match status" value="1"/>
</dbReference>
<dbReference type="NCBIfam" id="TIGR01163">
    <property type="entry name" value="rpe"/>
    <property type="match status" value="1"/>
</dbReference>
<dbReference type="PANTHER" id="PTHR11749">
    <property type="entry name" value="RIBULOSE-5-PHOSPHATE-3-EPIMERASE"/>
    <property type="match status" value="1"/>
</dbReference>
<dbReference type="Pfam" id="PF00834">
    <property type="entry name" value="Ribul_P_3_epim"/>
    <property type="match status" value="1"/>
</dbReference>
<dbReference type="PIRSF" id="PIRSF001461">
    <property type="entry name" value="RPE"/>
    <property type="match status" value="1"/>
</dbReference>
<dbReference type="SUPFAM" id="SSF51366">
    <property type="entry name" value="Ribulose-phoshate binding barrel"/>
    <property type="match status" value="1"/>
</dbReference>
<dbReference type="PROSITE" id="PS01085">
    <property type="entry name" value="RIBUL_P_3_EPIMER_1"/>
    <property type="match status" value="1"/>
</dbReference>
<dbReference type="PROSITE" id="PS01086">
    <property type="entry name" value="RIBUL_P_3_EPIMER_2"/>
    <property type="match status" value="1"/>
</dbReference>
<name>RPE_SHIFL</name>
<feature type="chain" id="PRO_0000171580" description="Ribulose-phosphate 3-epimerase">
    <location>
        <begin position="1"/>
        <end position="225"/>
    </location>
</feature>
<feature type="active site" description="Proton acceptor" evidence="1">
    <location>
        <position position="36"/>
    </location>
</feature>
<feature type="active site" description="Proton donor" evidence="1">
    <location>
        <position position="177"/>
    </location>
</feature>
<feature type="binding site" evidence="1">
    <location>
        <position position="9"/>
    </location>
    <ligand>
        <name>substrate</name>
    </ligand>
</feature>
<feature type="binding site" evidence="1">
    <location>
        <position position="34"/>
    </location>
    <ligand>
        <name>a divalent metal cation</name>
        <dbReference type="ChEBI" id="CHEBI:60240"/>
    </ligand>
</feature>
<feature type="binding site" evidence="1">
    <location>
        <position position="36"/>
    </location>
    <ligand>
        <name>a divalent metal cation</name>
        <dbReference type="ChEBI" id="CHEBI:60240"/>
    </ligand>
</feature>
<feature type="binding site" evidence="1">
    <location>
        <position position="68"/>
    </location>
    <ligand>
        <name>a divalent metal cation</name>
        <dbReference type="ChEBI" id="CHEBI:60240"/>
    </ligand>
</feature>
<feature type="binding site" evidence="1">
    <location>
        <position position="68"/>
    </location>
    <ligand>
        <name>substrate</name>
    </ligand>
</feature>
<feature type="binding site" evidence="1">
    <location>
        <begin position="144"/>
        <end position="147"/>
    </location>
    <ligand>
        <name>substrate</name>
    </ligand>
</feature>
<feature type="binding site" evidence="1">
    <location>
        <begin position="177"/>
        <end position="179"/>
    </location>
    <ligand>
        <name>substrate</name>
    </ligand>
</feature>
<feature type="binding site" evidence="1">
    <location>
        <position position="177"/>
    </location>
    <ligand>
        <name>a divalent metal cation</name>
        <dbReference type="ChEBI" id="CHEBI:60240"/>
    </ligand>
</feature>
<feature type="binding site" evidence="1">
    <location>
        <begin position="199"/>
        <end position="200"/>
    </location>
    <ligand>
        <name>substrate</name>
    </ligand>
</feature>
<protein>
    <recommendedName>
        <fullName evidence="1">Ribulose-phosphate 3-epimerase</fullName>
        <ecNumber evidence="1">5.1.3.1</ecNumber>
    </recommendedName>
</protein>
<comment type="function">
    <text evidence="1">Catalyzes the reversible epimerization of D-ribulose 5-phosphate to D-xylulose 5-phosphate.</text>
</comment>
<comment type="catalytic activity">
    <reaction evidence="1">
        <text>D-ribulose 5-phosphate = D-xylulose 5-phosphate</text>
        <dbReference type="Rhea" id="RHEA:13677"/>
        <dbReference type="ChEBI" id="CHEBI:57737"/>
        <dbReference type="ChEBI" id="CHEBI:58121"/>
        <dbReference type="EC" id="5.1.3.1"/>
    </reaction>
</comment>
<comment type="cofactor">
    <cofactor evidence="1">
        <name>a divalent metal cation</name>
        <dbReference type="ChEBI" id="CHEBI:60240"/>
    </cofactor>
    <text evidence="1">Binds 1 divalent metal cation per subunit.</text>
</comment>
<comment type="pathway">
    <text evidence="1">Carbohydrate degradation.</text>
</comment>
<comment type="similarity">
    <text evidence="1">Belongs to the ribulose-phosphate 3-epimerase family.</text>
</comment>
<organism>
    <name type="scientific">Shigella flexneri</name>
    <dbReference type="NCBI Taxonomy" id="623"/>
    <lineage>
        <taxon>Bacteria</taxon>
        <taxon>Pseudomonadati</taxon>
        <taxon>Pseudomonadota</taxon>
        <taxon>Gammaproteobacteria</taxon>
        <taxon>Enterobacterales</taxon>
        <taxon>Enterobacteriaceae</taxon>
        <taxon>Shigella</taxon>
    </lineage>
</organism>
<reference key="1">
    <citation type="journal article" date="2002" name="Nucleic Acids Res.">
        <title>Genome sequence of Shigella flexneri 2a: insights into pathogenicity through comparison with genomes of Escherichia coli K12 and O157.</title>
        <authorList>
            <person name="Jin Q."/>
            <person name="Yuan Z."/>
            <person name="Xu J."/>
            <person name="Wang Y."/>
            <person name="Shen Y."/>
            <person name="Lu W."/>
            <person name="Wang J."/>
            <person name="Liu H."/>
            <person name="Yang J."/>
            <person name="Yang F."/>
            <person name="Zhang X."/>
            <person name="Zhang J."/>
            <person name="Yang G."/>
            <person name="Wu H."/>
            <person name="Qu D."/>
            <person name="Dong J."/>
            <person name="Sun L."/>
            <person name="Xue Y."/>
            <person name="Zhao A."/>
            <person name="Gao Y."/>
            <person name="Zhu J."/>
            <person name="Kan B."/>
            <person name="Ding K."/>
            <person name="Chen S."/>
            <person name="Cheng H."/>
            <person name="Yao Z."/>
            <person name="He B."/>
            <person name="Chen R."/>
            <person name="Ma D."/>
            <person name="Qiang B."/>
            <person name="Wen Y."/>
            <person name="Hou Y."/>
            <person name="Yu J."/>
        </authorList>
    </citation>
    <scope>NUCLEOTIDE SEQUENCE [LARGE SCALE GENOMIC DNA]</scope>
    <source>
        <strain>301 / Serotype 2a</strain>
    </source>
</reference>
<reference key="2">
    <citation type="journal article" date="2003" name="Infect. Immun.">
        <title>Complete genome sequence and comparative genomics of Shigella flexneri serotype 2a strain 2457T.</title>
        <authorList>
            <person name="Wei J."/>
            <person name="Goldberg M.B."/>
            <person name="Burland V."/>
            <person name="Venkatesan M.M."/>
            <person name="Deng W."/>
            <person name="Fournier G."/>
            <person name="Mayhew G.F."/>
            <person name="Plunkett G. III"/>
            <person name="Rose D.J."/>
            <person name="Darling A."/>
            <person name="Mau B."/>
            <person name="Perna N.T."/>
            <person name="Payne S.M."/>
            <person name="Runyen-Janecky L.J."/>
            <person name="Zhou S."/>
            <person name="Schwartz D.C."/>
            <person name="Blattner F.R."/>
        </authorList>
    </citation>
    <scope>NUCLEOTIDE SEQUENCE [LARGE SCALE GENOMIC DNA]</scope>
    <source>
        <strain>ATCC 700930 / 2457T / Serotype 2a</strain>
    </source>
</reference>
<keyword id="KW-0119">Carbohydrate metabolism</keyword>
<keyword id="KW-0413">Isomerase</keyword>
<keyword id="KW-0479">Metal-binding</keyword>
<keyword id="KW-1185">Reference proteome</keyword>
<sequence>MKQYLIAPSILSADFARLGEDTAKALAAGADVVHFDVMDNHYVPNLTIGPMVLKSLRNYGITAPIDVHLMVKPVDRIVPDFAAAGASIITFHPEASEHVDRTLQLIKENGCKAGLVFNPATPLSYLDYVMDKLDVILLMSVNPGFGGQSFIPQTLDKLREVRRRIDESGFDIRLEVDGGVKVNNIGEIAAAGADMFVAGSAIFDQPDYKKVIDEMRSELAKVSHE</sequence>
<accession>P0AG10</accession>
<accession>P32661</accession>
<evidence type="ECO:0000255" key="1">
    <source>
        <dbReference type="HAMAP-Rule" id="MF_02227"/>
    </source>
</evidence>
<gene>
    <name evidence="1" type="primary">rpe</name>
    <name type="ordered locus">SF3404</name>
    <name type="ordered locus">S4358</name>
</gene>